<organism>
    <name type="scientific">Cyanophora paradoxa</name>
    <dbReference type="NCBI Taxonomy" id="2762"/>
    <lineage>
        <taxon>Eukaryota</taxon>
        <taxon>Glaucocystophyceae</taxon>
        <taxon>Cyanophoraceae</taxon>
        <taxon>Cyanophora</taxon>
    </lineage>
</organism>
<keyword id="KW-0194">Cyanelle</keyword>
<keyword id="KW-0201">Cytochrome c-type biogenesis</keyword>
<keyword id="KW-0472">Membrane</keyword>
<keyword id="KW-0934">Plastid</keyword>
<keyword id="KW-0793">Thylakoid</keyword>
<keyword id="KW-0812">Transmembrane</keyword>
<keyword id="KW-1133">Transmembrane helix</keyword>
<name>CCSA_CYAPA</name>
<accession>P48257</accession>
<feature type="chain" id="PRO_0000201602" description="Cytochrome c biogenesis protein CcsA">
    <location>
        <begin position="1"/>
        <end position="322"/>
    </location>
</feature>
<feature type="transmembrane region" description="Helical" evidence="2">
    <location>
        <begin position="6"/>
        <end position="26"/>
    </location>
</feature>
<feature type="transmembrane region" description="Helical" evidence="2">
    <location>
        <begin position="45"/>
        <end position="65"/>
    </location>
</feature>
<feature type="transmembrane region" description="Helical" evidence="2">
    <location>
        <begin position="69"/>
        <end position="89"/>
    </location>
</feature>
<feature type="transmembrane region" description="Helical" evidence="2">
    <location>
        <begin position="97"/>
        <end position="117"/>
    </location>
</feature>
<feature type="transmembrane region" description="Helical" evidence="2">
    <location>
        <begin position="144"/>
        <end position="164"/>
    </location>
</feature>
<feature type="transmembrane region" description="Helical" evidence="2">
    <location>
        <begin position="230"/>
        <end position="250"/>
    </location>
</feature>
<feature type="transmembrane region" description="Helical" evidence="2">
    <location>
        <begin position="265"/>
        <end position="285"/>
    </location>
</feature>
<feature type="transmembrane region" description="Helical" evidence="2">
    <location>
        <begin position="291"/>
        <end position="311"/>
    </location>
</feature>
<geneLocation type="cyanelle"/>
<protein>
    <recommendedName>
        <fullName evidence="2">Cytochrome c biogenesis protein CcsA</fullName>
    </recommendedName>
</protein>
<proteinExistence type="inferred from homology"/>
<evidence type="ECO:0000250" key="1"/>
<evidence type="ECO:0000255" key="2">
    <source>
        <dbReference type="HAMAP-Rule" id="MF_01391"/>
    </source>
</evidence>
<comment type="function">
    <text evidence="2">Required during biogenesis of c-type cytochromes (cytochrome c6 and cytochrome f) at the step of heme attachment.</text>
</comment>
<comment type="subunit">
    <text evidence="2">May interact with Ccs1.</text>
</comment>
<comment type="subcellular location">
    <subcellularLocation>
        <location evidence="1">Plastid</location>
        <location evidence="1">Cyanelle thylakoid membrane</location>
        <topology evidence="2">Multi-pass membrane protein</topology>
    </subcellularLocation>
</comment>
<comment type="similarity">
    <text evidence="2">Belongs to the CcmF/CycK/Ccl1/NrfE/CcsA family.</text>
</comment>
<reference key="1">
    <citation type="journal article" date="1995" name="Plant Mol. Biol. Rep.">
        <title>Nucleotide sequence of the cyanelle DNA from Cyanophora paradoxa.</title>
        <authorList>
            <person name="Stirewalt V.L."/>
            <person name="Michalowski C.B."/>
            <person name="Loeffelhardt W."/>
            <person name="Bohnert H.J."/>
            <person name="Bryant D.A."/>
        </authorList>
    </citation>
    <scope>NUCLEOTIDE SEQUENCE [LARGE SCALE GENOMIC DNA]</scope>
    <source>
        <strain>UTEX LB 555 / Pringsheim</strain>
    </source>
</reference>
<reference key="2">
    <citation type="book" date="1997" name="Eukaryotism and symbiosis">
        <title>The complete sequence of the cyanelle genome of Cyanophora paradoxa: the genetic complexity of a primitive plastid.</title>
        <editorList>
            <person name="Schenk H.E.A."/>
            <person name="Herrmann R."/>
            <person name="Jeon K.W."/>
            <person name="Mueller N.E."/>
            <person name="Schwemmler W."/>
        </editorList>
        <authorList>
            <person name="Loeffelhardt W."/>
            <person name="Stirewalt V.L."/>
            <person name="Michalowski C.B."/>
            <person name="Annarella M."/>
            <person name="Farley J.Y."/>
            <person name="Schluchter W.M."/>
            <person name="Chung S."/>
            <person name="Newmann-Spallart C."/>
            <person name="Steiner J.M."/>
            <person name="Jakowitsch J."/>
            <person name="Bohnert H.J."/>
            <person name="Bryant D.A."/>
        </authorList>
    </citation>
    <scope>NUCLEOTIDE SEQUENCE [LARGE SCALE GENOMIC DNA]</scope>
    <source>
        <strain>UTEX LB 555 / Pringsheim</strain>
    </source>
</reference>
<dbReference type="EMBL" id="U30821">
    <property type="protein sequence ID" value="AAA81298.1"/>
    <property type="molecule type" value="Genomic_DNA"/>
</dbReference>
<dbReference type="PIR" id="T06955">
    <property type="entry name" value="T06955"/>
</dbReference>
<dbReference type="RefSeq" id="NP_043267.1">
    <property type="nucleotide sequence ID" value="NC_001675.1"/>
</dbReference>
<dbReference type="SMR" id="P48257"/>
<dbReference type="GeneID" id="801592"/>
<dbReference type="GO" id="GO:0033115">
    <property type="term" value="C:cyanelle thylakoid membrane"/>
    <property type="evidence" value="ECO:0007669"/>
    <property type="project" value="UniProtKB-SubCell"/>
</dbReference>
<dbReference type="GO" id="GO:0005886">
    <property type="term" value="C:plasma membrane"/>
    <property type="evidence" value="ECO:0007669"/>
    <property type="project" value="TreeGrafter"/>
</dbReference>
<dbReference type="GO" id="GO:0020037">
    <property type="term" value="F:heme binding"/>
    <property type="evidence" value="ECO:0007669"/>
    <property type="project" value="InterPro"/>
</dbReference>
<dbReference type="GO" id="GO:0017004">
    <property type="term" value="P:cytochrome complex assembly"/>
    <property type="evidence" value="ECO:0007669"/>
    <property type="project" value="UniProtKB-UniRule"/>
</dbReference>
<dbReference type="HAMAP" id="MF_01391">
    <property type="entry name" value="CytC_CcsA"/>
    <property type="match status" value="1"/>
</dbReference>
<dbReference type="InterPro" id="IPR002541">
    <property type="entry name" value="Cyt_c_assembly"/>
</dbReference>
<dbReference type="InterPro" id="IPR017562">
    <property type="entry name" value="Cyt_c_biogenesis_CcsA"/>
</dbReference>
<dbReference type="InterPro" id="IPR045062">
    <property type="entry name" value="Cyt_c_biogenesis_CcsA/CcmC"/>
</dbReference>
<dbReference type="NCBIfam" id="TIGR03144">
    <property type="entry name" value="cytochr_II_ccsB"/>
    <property type="match status" value="1"/>
</dbReference>
<dbReference type="PANTHER" id="PTHR30071:SF1">
    <property type="entry name" value="CYTOCHROME B_B6 PROTEIN-RELATED"/>
    <property type="match status" value="1"/>
</dbReference>
<dbReference type="PANTHER" id="PTHR30071">
    <property type="entry name" value="HEME EXPORTER PROTEIN C"/>
    <property type="match status" value="1"/>
</dbReference>
<dbReference type="Pfam" id="PF01578">
    <property type="entry name" value="Cytochrom_C_asm"/>
    <property type="match status" value="1"/>
</dbReference>
<gene>
    <name evidence="2" type="primary">ccsA</name>
</gene>
<sequence>MNISTLQLILETFSFFIYFILTFLFFAQAIFKNHWLKTFNFSGMLIANVSIFLLLITRWITAGYFPISNLYESLFFLVWGLNTIWLFLYKNNMRIQLLDNSVSLLLTLLVGFLHFILPQEMREISPLVPALKSNWLMMHVSVMMISYATLMIGSLLSIIYLYFLYRVDKLLNKINAVNLMTSNQNSNSLIYNLSFNTLLNSSKSMEYQILLKDLSLIKLSKRLDNLSYRLITFGFPLLTIGIIAGAVWANEAWGSYWSWDPKETWALITWLIFAIYLHTRIIKGWQGKKAAMVASLGFFIIWICYLGVNLLGKGIHSYGWFF</sequence>